<comment type="function">
    <text evidence="1">Chaperone involved in the maturation of iron-sulfur cluster-containing proteins. Has a low intrinsic ATPase activity which is markedly stimulated by HscB.</text>
</comment>
<comment type="similarity">
    <text evidence="1">Belongs to the heat shock protein 70 family.</text>
</comment>
<name>HSCA_ACIF5</name>
<gene>
    <name evidence="1" type="primary">hscA</name>
    <name type="ordered locus">Lferr_0826</name>
</gene>
<accession>B5ENY5</accession>
<sequence>MALMQIAEPGTAADPHQRRLAIGIDLGTTHSLVASVLSAVPTVMRDHDGKYLLPSVVRYLGGGGIHVGYPAVAAAGQDPHNTIASAKRLMGRGHGDVQTLAGHLPYDLVPGEGMVRLRTVAGEKSPVEVSAEILRVLKERAVETLGGEPEGAVITVPAYFDEAQRQATKDAARLAGLNVLRLLAEPTAAAVAYGLDKGSEGIFAIYDLGGGTFDISILRLQAGVFEVLATAGDSALGGDDMDHALAEWLMQEEGGDASDPLWRRQVLQQARTAKEALSAVAETMIVLTPSGRAAREIKLSRGRLESLIQPVIQRSLPACRRALRDAGLKLDEIEGVVLVGGATRVPAVRAMVEEFFRQKPLTDIDPDQVVAIGAAIQADALVGNQREDLLLMDVLPLSLGLETMGGLVEKIIPRNTPIPVARAQEFTTFKDGQTAMSIHVVQGERDLVQDCRSLARFSLRGIPPMVAGAARIRVTFQVDADGLLAVRAEETSTGVRSEVVVKPSYGLNDEEIARMLQDSFIHGAEDVVRRRLSEAKVEGERVREALRTALAADADLLDPAEREALDKAGTALTNALSGDDAGVITAAAEAVETAAEPLVQRRMDSALRRAITGRSIDELGD</sequence>
<proteinExistence type="inferred from homology"/>
<feature type="chain" id="PRO_1000131661" description="Chaperone protein HscA homolog">
    <location>
        <begin position="1"/>
        <end position="621"/>
    </location>
</feature>
<reference key="1">
    <citation type="submission" date="2008-08" db="EMBL/GenBank/DDBJ databases">
        <title>Complete sequence of Acidithiobacillus ferrooxidans ATCC 53993.</title>
        <authorList>
            <person name="Lucas S."/>
            <person name="Copeland A."/>
            <person name="Lapidus A."/>
            <person name="Glavina del Rio T."/>
            <person name="Dalin E."/>
            <person name="Tice H."/>
            <person name="Bruce D."/>
            <person name="Goodwin L."/>
            <person name="Pitluck S."/>
            <person name="Sims D."/>
            <person name="Brettin T."/>
            <person name="Detter J.C."/>
            <person name="Han C."/>
            <person name="Kuske C.R."/>
            <person name="Larimer F."/>
            <person name="Land M."/>
            <person name="Hauser L."/>
            <person name="Kyrpides N."/>
            <person name="Lykidis A."/>
            <person name="Borole A.P."/>
        </authorList>
    </citation>
    <scope>NUCLEOTIDE SEQUENCE [LARGE SCALE GENOMIC DNA]</scope>
    <source>
        <strain>ATCC 53993 / BNL-5-31</strain>
    </source>
</reference>
<organism>
    <name type="scientific">Acidithiobacillus ferrooxidans (strain ATCC 53993 / BNL-5-31)</name>
    <name type="common">Leptospirillum ferrooxidans (ATCC 53993)</name>
    <dbReference type="NCBI Taxonomy" id="380394"/>
    <lineage>
        <taxon>Bacteria</taxon>
        <taxon>Pseudomonadati</taxon>
        <taxon>Pseudomonadota</taxon>
        <taxon>Acidithiobacillia</taxon>
        <taxon>Acidithiobacillales</taxon>
        <taxon>Acidithiobacillaceae</taxon>
        <taxon>Acidithiobacillus</taxon>
    </lineage>
</organism>
<protein>
    <recommendedName>
        <fullName evidence="1">Chaperone protein HscA homolog</fullName>
    </recommendedName>
</protein>
<dbReference type="EMBL" id="CP001132">
    <property type="protein sequence ID" value="ACH83076.1"/>
    <property type="molecule type" value="Genomic_DNA"/>
</dbReference>
<dbReference type="RefSeq" id="WP_012536278.1">
    <property type="nucleotide sequence ID" value="NC_011206.1"/>
</dbReference>
<dbReference type="SMR" id="B5ENY5"/>
<dbReference type="GeneID" id="65280028"/>
<dbReference type="KEGG" id="afe:Lferr_0826"/>
<dbReference type="eggNOG" id="COG0443">
    <property type="taxonomic scope" value="Bacteria"/>
</dbReference>
<dbReference type="HOGENOM" id="CLU_005965_2_3_6"/>
<dbReference type="GO" id="GO:0005524">
    <property type="term" value="F:ATP binding"/>
    <property type="evidence" value="ECO:0007669"/>
    <property type="project" value="UniProtKB-KW"/>
</dbReference>
<dbReference type="GO" id="GO:0016887">
    <property type="term" value="F:ATP hydrolysis activity"/>
    <property type="evidence" value="ECO:0007669"/>
    <property type="project" value="UniProtKB-UniRule"/>
</dbReference>
<dbReference type="GO" id="GO:0140662">
    <property type="term" value="F:ATP-dependent protein folding chaperone"/>
    <property type="evidence" value="ECO:0007669"/>
    <property type="project" value="InterPro"/>
</dbReference>
<dbReference type="GO" id="GO:0051082">
    <property type="term" value="F:unfolded protein binding"/>
    <property type="evidence" value="ECO:0007669"/>
    <property type="project" value="InterPro"/>
</dbReference>
<dbReference type="GO" id="GO:0016226">
    <property type="term" value="P:iron-sulfur cluster assembly"/>
    <property type="evidence" value="ECO:0007669"/>
    <property type="project" value="InterPro"/>
</dbReference>
<dbReference type="FunFam" id="2.60.34.10:FF:000005">
    <property type="entry name" value="Chaperone protein HscA homolog"/>
    <property type="match status" value="1"/>
</dbReference>
<dbReference type="Gene3D" id="1.20.1270.10">
    <property type="match status" value="1"/>
</dbReference>
<dbReference type="Gene3D" id="3.30.420.40">
    <property type="match status" value="2"/>
</dbReference>
<dbReference type="Gene3D" id="3.90.640.10">
    <property type="entry name" value="Actin, Chain A, domain 4"/>
    <property type="match status" value="1"/>
</dbReference>
<dbReference type="Gene3D" id="2.60.34.10">
    <property type="entry name" value="Substrate Binding Domain Of DNAk, Chain A, domain 1"/>
    <property type="match status" value="1"/>
</dbReference>
<dbReference type="HAMAP" id="MF_00679">
    <property type="entry name" value="HscA"/>
    <property type="match status" value="1"/>
</dbReference>
<dbReference type="InterPro" id="IPR043129">
    <property type="entry name" value="ATPase_NBD"/>
</dbReference>
<dbReference type="InterPro" id="IPR018181">
    <property type="entry name" value="Heat_shock_70_CS"/>
</dbReference>
<dbReference type="InterPro" id="IPR029048">
    <property type="entry name" value="HSP70_C_sf"/>
</dbReference>
<dbReference type="InterPro" id="IPR029047">
    <property type="entry name" value="HSP70_peptide-bd_sf"/>
</dbReference>
<dbReference type="InterPro" id="IPR013126">
    <property type="entry name" value="Hsp_70_fam"/>
</dbReference>
<dbReference type="InterPro" id="IPR010236">
    <property type="entry name" value="ISC_FeS_clus_asmbl_HscA"/>
</dbReference>
<dbReference type="NCBIfam" id="TIGR01991">
    <property type="entry name" value="HscA"/>
    <property type="match status" value="1"/>
</dbReference>
<dbReference type="NCBIfam" id="NF003520">
    <property type="entry name" value="PRK05183.1"/>
    <property type="match status" value="1"/>
</dbReference>
<dbReference type="PANTHER" id="PTHR19375">
    <property type="entry name" value="HEAT SHOCK PROTEIN 70KDA"/>
    <property type="match status" value="1"/>
</dbReference>
<dbReference type="Pfam" id="PF00012">
    <property type="entry name" value="HSP70"/>
    <property type="match status" value="1"/>
</dbReference>
<dbReference type="PRINTS" id="PR00301">
    <property type="entry name" value="HEATSHOCK70"/>
</dbReference>
<dbReference type="SUPFAM" id="SSF53067">
    <property type="entry name" value="Actin-like ATPase domain"/>
    <property type="match status" value="2"/>
</dbReference>
<dbReference type="SUPFAM" id="SSF100934">
    <property type="entry name" value="Heat shock protein 70kD (HSP70), C-terminal subdomain"/>
    <property type="match status" value="1"/>
</dbReference>
<dbReference type="SUPFAM" id="SSF100920">
    <property type="entry name" value="Heat shock protein 70kD (HSP70), peptide-binding domain"/>
    <property type="match status" value="1"/>
</dbReference>
<dbReference type="PROSITE" id="PS00297">
    <property type="entry name" value="HSP70_1"/>
    <property type="match status" value="1"/>
</dbReference>
<dbReference type="PROSITE" id="PS00329">
    <property type="entry name" value="HSP70_2"/>
    <property type="match status" value="1"/>
</dbReference>
<dbReference type="PROSITE" id="PS01036">
    <property type="entry name" value="HSP70_3"/>
    <property type="match status" value="1"/>
</dbReference>
<evidence type="ECO:0000255" key="1">
    <source>
        <dbReference type="HAMAP-Rule" id="MF_00679"/>
    </source>
</evidence>
<keyword id="KW-0067">ATP-binding</keyword>
<keyword id="KW-0143">Chaperone</keyword>
<keyword id="KW-0547">Nucleotide-binding</keyword>